<name>CDO1_PONAB</name>
<protein>
    <recommendedName>
        <fullName>Cysteine dioxygenase type 1</fullName>
        <ecNumber evidence="2">1.13.11.20</ecNumber>
    </recommendedName>
    <alternativeName>
        <fullName>Cysteine dioxygenase type I</fullName>
        <shortName>CDO</shortName>
        <shortName>CDO-I</shortName>
    </alternativeName>
</protein>
<gene>
    <name type="primary">CDO1</name>
</gene>
<dbReference type="EC" id="1.13.11.20" evidence="2"/>
<dbReference type="EMBL" id="CR858581">
    <property type="protein sequence ID" value="CAH90803.1"/>
    <property type="molecule type" value="mRNA"/>
</dbReference>
<dbReference type="RefSeq" id="NP_001127336.1">
    <property type="nucleotide sequence ID" value="NM_001133864.1"/>
</dbReference>
<dbReference type="SMR" id="Q5RBQ7"/>
<dbReference type="FunCoup" id="Q5RBQ7">
    <property type="interactions" value="476"/>
</dbReference>
<dbReference type="STRING" id="9601.ENSPPYP00000017558"/>
<dbReference type="Ensembl" id="ENSPPYT00000018267.3">
    <property type="protein sequence ID" value="ENSPPYP00000017558.2"/>
    <property type="gene ID" value="ENSPPYG00000015698.3"/>
</dbReference>
<dbReference type="GeneID" id="100174398"/>
<dbReference type="KEGG" id="pon:100174398"/>
<dbReference type="CTD" id="1036"/>
<dbReference type="eggNOG" id="KOG4064">
    <property type="taxonomic scope" value="Eukaryota"/>
</dbReference>
<dbReference type="GeneTree" id="ENSGT00390000018226"/>
<dbReference type="HOGENOM" id="CLU_079443_1_0_1"/>
<dbReference type="InParanoid" id="Q5RBQ7"/>
<dbReference type="OMA" id="YTENQVT"/>
<dbReference type="OrthoDB" id="543511at2759"/>
<dbReference type="TreeFam" id="TF105636"/>
<dbReference type="UniPathway" id="UPA00012">
    <property type="reaction ID" value="UER00537"/>
</dbReference>
<dbReference type="Proteomes" id="UP000001595">
    <property type="component" value="Chromosome 5"/>
</dbReference>
<dbReference type="GO" id="GO:0005829">
    <property type="term" value="C:cytosol"/>
    <property type="evidence" value="ECO:0007669"/>
    <property type="project" value="Ensembl"/>
</dbReference>
<dbReference type="GO" id="GO:0017172">
    <property type="term" value="F:cysteine dioxygenase activity"/>
    <property type="evidence" value="ECO:0000250"/>
    <property type="project" value="UniProtKB"/>
</dbReference>
<dbReference type="GO" id="GO:0008198">
    <property type="term" value="F:ferrous iron binding"/>
    <property type="evidence" value="ECO:0000250"/>
    <property type="project" value="UniProtKB"/>
</dbReference>
<dbReference type="GO" id="GO:0016151">
    <property type="term" value="F:nickel cation binding"/>
    <property type="evidence" value="ECO:0000250"/>
    <property type="project" value="UniProtKB"/>
</dbReference>
<dbReference type="GO" id="GO:0008270">
    <property type="term" value="F:zinc ion binding"/>
    <property type="evidence" value="ECO:0000250"/>
    <property type="project" value="UniProtKB"/>
</dbReference>
<dbReference type="GO" id="GO:0019448">
    <property type="term" value="P:L-cysteine catabolic process"/>
    <property type="evidence" value="ECO:0007669"/>
    <property type="project" value="TreeGrafter"/>
</dbReference>
<dbReference type="GO" id="GO:0042412">
    <property type="term" value="P:taurine biosynthetic process"/>
    <property type="evidence" value="ECO:0007669"/>
    <property type="project" value="UniProtKB-UniPathway"/>
</dbReference>
<dbReference type="CDD" id="cd10548">
    <property type="entry name" value="cupin_CDO"/>
    <property type="match status" value="1"/>
</dbReference>
<dbReference type="FunFam" id="2.60.120.10:FF:000045">
    <property type="entry name" value="Cysteine dioxygenase 1"/>
    <property type="match status" value="1"/>
</dbReference>
<dbReference type="Gene3D" id="2.60.120.10">
    <property type="entry name" value="Jelly Rolls"/>
    <property type="match status" value="1"/>
</dbReference>
<dbReference type="InterPro" id="IPR010300">
    <property type="entry name" value="CDO_1"/>
</dbReference>
<dbReference type="InterPro" id="IPR014710">
    <property type="entry name" value="RmlC-like_jellyroll"/>
</dbReference>
<dbReference type="InterPro" id="IPR011051">
    <property type="entry name" value="RmlC_Cupin_sf"/>
</dbReference>
<dbReference type="PANTHER" id="PTHR12918">
    <property type="entry name" value="CYSTEINE DIOXYGENASE"/>
    <property type="match status" value="1"/>
</dbReference>
<dbReference type="PANTHER" id="PTHR12918:SF1">
    <property type="entry name" value="CYSTEINE DIOXYGENASE TYPE 1"/>
    <property type="match status" value="1"/>
</dbReference>
<dbReference type="Pfam" id="PF05995">
    <property type="entry name" value="CDO_I"/>
    <property type="match status" value="1"/>
</dbReference>
<dbReference type="SUPFAM" id="SSF51182">
    <property type="entry name" value="RmlC-like cupins"/>
    <property type="match status" value="1"/>
</dbReference>
<accession>Q5RBQ7</accession>
<reference key="1">
    <citation type="submission" date="2004-11" db="EMBL/GenBank/DDBJ databases">
        <authorList>
            <consortium name="The German cDNA consortium"/>
        </authorList>
    </citation>
    <scope>NUCLEOTIDE SEQUENCE [LARGE SCALE MRNA]</scope>
    <source>
        <tissue>Liver</tissue>
    </source>
</reference>
<comment type="function">
    <text evidence="2">Catalyzes the oxidation of cysteine to cysteine sulfinic acid with addition of molecular dioxygen.</text>
</comment>
<comment type="catalytic activity">
    <reaction evidence="2">
        <text>L-cysteine + O2 = 3-sulfino-L-alanine + H(+)</text>
        <dbReference type="Rhea" id="RHEA:20441"/>
        <dbReference type="ChEBI" id="CHEBI:15378"/>
        <dbReference type="ChEBI" id="CHEBI:15379"/>
        <dbReference type="ChEBI" id="CHEBI:35235"/>
        <dbReference type="ChEBI" id="CHEBI:61085"/>
        <dbReference type="EC" id="1.13.11.20"/>
    </reaction>
    <physiologicalReaction direction="left-to-right" evidence="2">
        <dbReference type="Rhea" id="RHEA:20442"/>
    </physiologicalReaction>
</comment>
<comment type="cofactor">
    <cofactor evidence="1">
        <name>Fe cation</name>
        <dbReference type="ChEBI" id="CHEBI:24875"/>
    </cofactor>
    <cofactor evidence="1">
        <name>Ni(2+)</name>
        <dbReference type="ChEBI" id="CHEBI:49786"/>
    </cofactor>
    <cofactor evidence="1">
        <name>Zn(2+)</name>
        <dbReference type="ChEBI" id="CHEBI:29105"/>
    </cofactor>
    <text evidence="1">Binds 1 Fe cation per subunit. Ni(2+) and Zn(2+) can be used to a lesser extent.</text>
</comment>
<comment type="pathway">
    <text>Organosulfur biosynthesis; taurine biosynthesis; hypotaurine from L-cysteine: step 1/2.</text>
</comment>
<comment type="subunit">
    <text evidence="2">Monomer.</text>
</comment>
<comment type="PTM">
    <text evidence="2">The thioether cross-link between Cys-93 and Tyr-157 plays a structural role through stabilizing the Fe(2+) ion, and prevents the production of highly damaging free hydroxyl radicals by holding the oxygen radical via hydroxyl hydrogen.</text>
</comment>
<comment type="similarity">
    <text evidence="3">Belongs to the cysteine dioxygenase family.</text>
</comment>
<keyword id="KW-0223">Dioxygenase</keyword>
<keyword id="KW-0408">Iron</keyword>
<keyword id="KW-0479">Metal-binding</keyword>
<keyword id="KW-0560">Oxidoreductase</keyword>
<keyword id="KW-1185">Reference proteome</keyword>
<keyword id="KW-0883">Thioether bond</keyword>
<organism>
    <name type="scientific">Pongo abelii</name>
    <name type="common">Sumatran orangutan</name>
    <name type="synonym">Pongo pygmaeus abelii</name>
    <dbReference type="NCBI Taxonomy" id="9601"/>
    <lineage>
        <taxon>Eukaryota</taxon>
        <taxon>Metazoa</taxon>
        <taxon>Chordata</taxon>
        <taxon>Craniata</taxon>
        <taxon>Vertebrata</taxon>
        <taxon>Euteleostomi</taxon>
        <taxon>Mammalia</taxon>
        <taxon>Eutheria</taxon>
        <taxon>Euarchontoglires</taxon>
        <taxon>Primates</taxon>
        <taxon>Haplorrhini</taxon>
        <taxon>Catarrhini</taxon>
        <taxon>Hominidae</taxon>
        <taxon>Pongo</taxon>
    </lineage>
</organism>
<sequence length="200" mass="22972">MEQTEVLKPRTLADLIRILHQLFAGDEVNVEEVQAIMEAYESDPTEWAMYAKFDQYRYTRNLVDQGNGKFNLMILCWGEGHGSSIHDHTNSHCFLKMLQGNLKETLFAWPDKKSNEMVKKSERVLRENQCAYINDSIGLHRVENISHTEPAVSLHLYSPPFDTCHAFDQRTGHKNKVTMTFHSKFGIRTPNATSGSLENN</sequence>
<feature type="chain" id="PRO_0000206608" description="Cysteine dioxygenase type 1">
    <location>
        <begin position="1"/>
        <end position="200"/>
    </location>
</feature>
<feature type="binding site" evidence="2">
    <location>
        <position position="86"/>
    </location>
    <ligand>
        <name>Fe cation</name>
        <dbReference type="ChEBI" id="CHEBI:24875"/>
        <note>catalytic</note>
    </ligand>
</feature>
<feature type="binding site" evidence="2">
    <location>
        <position position="88"/>
    </location>
    <ligand>
        <name>Fe cation</name>
        <dbReference type="ChEBI" id="CHEBI:24875"/>
        <note>catalytic</note>
    </ligand>
</feature>
<feature type="binding site" evidence="2">
    <location>
        <position position="140"/>
    </location>
    <ligand>
        <name>Fe cation</name>
        <dbReference type="ChEBI" id="CHEBI:24875"/>
        <note>catalytic</note>
    </ligand>
</feature>
<feature type="cross-link" description="3'-(S-cysteinyl)-tyrosine (Cys-Tyr)" evidence="2">
    <location>
        <begin position="93"/>
        <end position="157"/>
    </location>
</feature>
<evidence type="ECO:0000250" key="1">
    <source>
        <dbReference type="UniProtKB" id="P60334"/>
    </source>
</evidence>
<evidence type="ECO:0000250" key="2">
    <source>
        <dbReference type="UniProtKB" id="Q16878"/>
    </source>
</evidence>
<evidence type="ECO:0000305" key="3"/>
<proteinExistence type="evidence at transcript level"/>